<proteinExistence type="inferred from homology"/>
<comment type="function">
    <text evidence="3">Involved in degradation of plant cell walls. Hydrolyzes the feruloyl-arabinose ester bond in arabinoxylans as well as the feruloyl-galactose and feruloyl-arabinose ester bonds in pectin.</text>
</comment>
<comment type="catalytic activity">
    <reaction evidence="3">
        <text>feruloyl-polysaccharide + H2O = ferulate + polysaccharide.</text>
        <dbReference type="EC" id="3.1.1.73"/>
    </reaction>
</comment>
<comment type="subcellular location">
    <subcellularLocation>
        <location evidence="1">Secreted</location>
    </subcellularLocation>
</comment>
<comment type="similarity">
    <text evidence="5">Belongs to the tannase family.</text>
</comment>
<keyword id="KW-0106">Calcium</keyword>
<keyword id="KW-0119">Carbohydrate metabolism</keyword>
<keyword id="KW-1015">Disulfide bond</keyword>
<keyword id="KW-0325">Glycoprotein</keyword>
<keyword id="KW-0378">Hydrolase</keyword>
<keyword id="KW-0479">Metal-binding</keyword>
<keyword id="KW-0624">Polysaccharide degradation</keyword>
<keyword id="KW-1185">Reference proteome</keyword>
<keyword id="KW-0964">Secreted</keyword>
<keyword id="KW-0719">Serine esterase</keyword>
<keyword id="KW-0732">Signal</keyword>
<keyword id="KW-0858">Xylan degradation</keyword>
<protein>
    <recommendedName>
        <fullName>Probable feruloyl esterase B-2</fullName>
        <ecNumber evidence="3">3.1.1.73</ecNumber>
    </recommendedName>
    <alternativeName>
        <fullName>Ferulic acid esterase B-2</fullName>
        <shortName>FAEB-2</shortName>
    </alternativeName>
</protein>
<accession>A1DMV3</accession>
<organism>
    <name type="scientific">Neosartorya fischeri (strain ATCC 1020 / DSM 3700 / CBS 544.65 / FGSC A1164 / JCM 1740 / NRRL 181 / WB 181)</name>
    <name type="common">Aspergillus fischerianus</name>
    <dbReference type="NCBI Taxonomy" id="331117"/>
    <lineage>
        <taxon>Eukaryota</taxon>
        <taxon>Fungi</taxon>
        <taxon>Dikarya</taxon>
        <taxon>Ascomycota</taxon>
        <taxon>Pezizomycotina</taxon>
        <taxon>Eurotiomycetes</taxon>
        <taxon>Eurotiomycetidae</taxon>
        <taxon>Eurotiales</taxon>
        <taxon>Aspergillaceae</taxon>
        <taxon>Aspergillus</taxon>
        <taxon>Aspergillus subgen. Fumigati</taxon>
    </lineage>
</organism>
<gene>
    <name type="primary">faeB-2</name>
    <name type="ORF">NFIA_054700</name>
</gene>
<dbReference type="EC" id="3.1.1.73" evidence="3"/>
<dbReference type="EMBL" id="DS027698">
    <property type="protein sequence ID" value="EAW16124.1"/>
    <property type="molecule type" value="Genomic_DNA"/>
</dbReference>
<dbReference type="RefSeq" id="XP_001258021.1">
    <property type="nucleotide sequence ID" value="XM_001258020.1"/>
</dbReference>
<dbReference type="SMR" id="A1DMV3"/>
<dbReference type="STRING" id="331117.A1DMV3"/>
<dbReference type="ESTHER" id="neofi-faeb2">
    <property type="family name" value="Tannase"/>
</dbReference>
<dbReference type="GlyCosmos" id="A1DMV3">
    <property type="glycosylation" value="6 sites, No reported glycans"/>
</dbReference>
<dbReference type="EnsemblFungi" id="EAW16124">
    <property type="protein sequence ID" value="EAW16124"/>
    <property type="gene ID" value="NFIA_054700"/>
</dbReference>
<dbReference type="GeneID" id="4584536"/>
<dbReference type="KEGG" id="nfi:NFIA_054700"/>
<dbReference type="VEuPathDB" id="FungiDB:NFIA_054700"/>
<dbReference type="eggNOG" id="ENOG502QPXZ">
    <property type="taxonomic scope" value="Eukaryota"/>
</dbReference>
<dbReference type="HOGENOM" id="CLU_014819_1_0_1"/>
<dbReference type="OMA" id="AWFPREY"/>
<dbReference type="OrthoDB" id="3039123at2759"/>
<dbReference type="Proteomes" id="UP000006702">
    <property type="component" value="Unassembled WGS sequence"/>
</dbReference>
<dbReference type="GO" id="GO:0005576">
    <property type="term" value="C:extracellular region"/>
    <property type="evidence" value="ECO:0007669"/>
    <property type="project" value="UniProtKB-SubCell"/>
</dbReference>
<dbReference type="GO" id="GO:0030600">
    <property type="term" value="F:feruloyl esterase activity"/>
    <property type="evidence" value="ECO:0007669"/>
    <property type="project" value="UniProtKB-EC"/>
</dbReference>
<dbReference type="GO" id="GO:0046872">
    <property type="term" value="F:metal ion binding"/>
    <property type="evidence" value="ECO:0007669"/>
    <property type="project" value="UniProtKB-KW"/>
</dbReference>
<dbReference type="GO" id="GO:0045493">
    <property type="term" value="P:xylan catabolic process"/>
    <property type="evidence" value="ECO:0007669"/>
    <property type="project" value="UniProtKB-KW"/>
</dbReference>
<dbReference type="Gene3D" id="3.40.50.1820">
    <property type="entry name" value="alpha/beta hydrolase"/>
    <property type="match status" value="1"/>
</dbReference>
<dbReference type="InterPro" id="IPR029058">
    <property type="entry name" value="AB_hydrolase_fold"/>
</dbReference>
<dbReference type="InterPro" id="IPR011118">
    <property type="entry name" value="Tannase/feruloyl_esterase"/>
</dbReference>
<dbReference type="PANTHER" id="PTHR33938">
    <property type="entry name" value="FERULOYL ESTERASE B-RELATED"/>
    <property type="match status" value="1"/>
</dbReference>
<dbReference type="PANTHER" id="PTHR33938:SF15">
    <property type="entry name" value="FERULOYL ESTERASE B-RELATED"/>
    <property type="match status" value="1"/>
</dbReference>
<dbReference type="Pfam" id="PF07519">
    <property type="entry name" value="Tannase"/>
    <property type="match status" value="1"/>
</dbReference>
<dbReference type="SUPFAM" id="SSF53474">
    <property type="entry name" value="alpha/beta-Hydrolases"/>
    <property type="match status" value="1"/>
</dbReference>
<name>FAEB2_NEOFI</name>
<sequence>MTKLSLLPLLALASAVLAKQDAFQAKCASFGHRIKLPNVHVNFVEYVPGGTNLTLPDNHVTCGASSQIVSADMCRVAMAVDTSKSSQITLEAWFPRNYTGRFLSTGNGGLSGCIQYYDLAYTAGLGFATVGANNGHNGTSGKPFYQHPEVIEDFAYRSIHTGVVVGKQLIKMFYSEGFDKSYYLGCSTGGRQGFKSIQKYPNDFDGVVAGAPAFNFVNLISWSIHFYSITGSNTSDTYLSPASWKVVHDEIVRQCDGIDGAKDGIIEDTDLCHPILETIICKPGASSTTNCITGTQAKTVRNVLSPFYGVNGTLLYPRMQPGSELFASSIMYNGQPFSYSTDWYRYVVYNNPNWDATKWTVEDAAVALAQNPYNIQTWDADISSFQKAGGKVLTYHGIQDQLISSDNSKLYYARVAETMGLGPEELDDFYRFFPVSGMAHCSGGDGAYGIGNGLRTYNGAEPENNVLMAMVQWVEKGVAPEFIRGAKFSNGVGSPVEYTRKHCKYPRRNVYKGPGNYSDENAWECV</sequence>
<reference key="1">
    <citation type="journal article" date="2008" name="PLoS Genet.">
        <title>Genomic islands in the pathogenic filamentous fungus Aspergillus fumigatus.</title>
        <authorList>
            <person name="Fedorova N.D."/>
            <person name="Khaldi N."/>
            <person name="Joardar V.S."/>
            <person name="Maiti R."/>
            <person name="Amedeo P."/>
            <person name="Anderson M.J."/>
            <person name="Crabtree J."/>
            <person name="Silva J.C."/>
            <person name="Badger J.H."/>
            <person name="Albarraq A."/>
            <person name="Angiuoli S."/>
            <person name="Bussey H."/>
            <person name="Bowyer P."/>
            <person name="Cotty P.J."/>
            <person name="Dyer P.S."/>
            <person name="Egan A."/>
            <person name="Galens K."/>
            <person name="Fraser-Liggett C.M."/>
            <person name="Haas B.J."/>
            <person name="Inman J.M."/>
            <person name="Kent R."/>
            <person name="Lemieux S."/>
            <person name="Malavazi I."/>
            <person name="Orvis J."/>
            <person name="Roemer T."/>
            <person name="Ronning C.M."/>
            <person name="Sundaram J.P."/>
            <person name="Sutton G."/>
            <person name="Turner G."/>
            <person name="Venter J.C."/>
            <person name="White O.R."/>
            <person name="Whitty B.R."/>
            <person name="Youngman P."/>
            <person name="Wolfe K.H."/>
            <person name="Goldman G.H."/>
            <person name="Wortman J.R."/>
            <person name="Jiang B."/>
            <person name="Denning D.W."/>
            <person name="Nierman W.C."/>
        </authorList>
    </citation>
    <scope>NUCLEOTIDE SEQUENCE [LARGE SCALE GENOMIC DNA]</scope>
    <source>
        <strain>ATCC 1020 / DSM 3700 / CBS 544.65 / FGSC A1164 / JCM 1740 / NRRL 181 / WB 181</strain>
    </source>
</reference>
<evidence type="ECO:0000250" key="1"/>
<evidence type="ECO:0000250" key="2">
    <source>
        <dbReference type="UniProtKB" id="Q2UP89"/>
    </source>
</evidence>
<evidence type="ECO:0000250" key="3">
    <source>
        <dbReference type="UniProtKB" id="Q8WZI8"/>
    </source>
</evidence>
<evidence type="ECO:0000255" key="4"/>
<evidence type="ECO:0000305" key="5"/>
<feature type="signal peptide" evidence="4">
    <location>
        <begin position="1"/>
        <end position="18"/>
    </location>
</feature>
<feature type="chain" id="PRO_0000394932" description="Probable feruloyl esterase B-2">
    <location>
        <begin position="19"/>
        <end position="526"/>
    </location>
</feature>
<feature type="active site" description="Acyl-ester intermediate" evidence="2">
    <location>
        <position position="187"/>
    </location>
</feature>
<feature type="active site" description="Charge relay system" evidence="2">
    <location>
        <position position="400"/>
    </location>
</feature>
<feature type="active site" description="Charge relay system" evidence="2">
    <location>
        <position position="440"/>
    </location>
</feature>
<feature type="binding site" evidence="2">
    <location>
        <position position="256"/>
    </location>
    <ligand>
        <name>Ca(2+)</name>
        <dbReference type="ChEBI" id="CHEBI:29108"/>
    </ligand>
</feature>
<feature type="binding site" evidence="2">
    <location>
        <position position="259"/>
    </location>
    <ligand>
        <name>Ca(2+)</name>
        <dbReference type="ChEBI" id="CHEBI:29108"/>
    </ligand>
</feature>
<feature type="binding site" evidence="2">
    <location>
        <position position="261"/>
    </location>
    <ligand>
        <name>Ca(2+)</name>
        <dbReference type="ChEBI" id="CHEBI:29108"/>
    </ligand>
</feature>
<feature type="binding site" evidence="2">
    <location>
        <position position="263"/>
    </location>
    <ligand>
        <name>Ca(2+)</name>
        <dbReference type="ChEBI" id="CHEBI:29108"/>
    </ligand>
</feature>
<feature type="binding site" evidence="2">
    <location>
        <position position="265"/>
    </location>
    <ligand>
        <name>Ca(2+)</name>
        <dbReference type="ChEBI" id="CHEBI:29108"/>
    </ligand>
</feature>
<feature type="glycosylation site" description="N-linked (GlcNAc...) asparagine" evidence="4">
    <location>
        <position position="52"/>
    </location>
</feature>
<feature type="glycosylation site" description="N-linked (GlcNAc...) asparagine" evidence="4">
    <location>
        <position position="97"/>
    </location>
</feature>
<feature type="glycosylation site" description="N-linked (GlcNAc...) asparagine" evidence="4">
    <location>
        <position position="137"/>
    </location>
</feature>
<feature type="glycosylation site" description="N-linked (GlcNAc...) asparagine" evidence="4">
    <location>
        <position position="233"/>
    </location>
</feature>
<feature type="glycosylation site" description="N-linked (GlcNAc...) asparagine" evidence="4">
    <location>
        <position position="311"/>
    </location>
</feature>
<feature type="glycosylation site" description="N-linked (GlcNAc...) asparagine" evidence="4">
    <location>
        <position position="516"/>
    </location>
</feature>
<feature type="disulfide bond" evidence="2">
    <location>
        <begin position="27"/>
        <end position="74"/>
    </location>
</feature>
<feature type="disulfide bond" evidence="2">
    <location>
        <begin position="62"/>
        <end position="113"/>
    </location>
</feature>
<feature type="disulfide bond" evidence="2">
    <location>
        <begin position="186"/>
        <end position="441"/>
    </location>
</feature>
<feature type="disulfide bond" evidence="2">
    <location>
        <begin position="255"/>
        <end position="272"/>
    </location>
</feature>
<feature type="disulfide bond" evidence="2">
    <location>
        <begin position="281"/>
        <end position="291"/>
    </location>
</feature>
<feature type="disulfide bond" evidence="2">
    <location>
        <begin position="503"/>
        <end position="525"/>
    </location>
</feature>